<feature type="chain" id="PRO_0000288730" description="ATP synthase subunit c">
    <location>
        <begin position="1"/>
        <end position="74"/>
    </location>
</feature>
<feature type="transmembrane region" description="Helical" evidence="1">
    <location>
        <begin position="8"/>
        <end position="28"/>
    </location>
</feature>
<feature type="transmembrane region" description="Helical" evidence="1">
    <location>
        <begin position="52"/>
        <end position="72"/>
    </location>
</feature>
<feature type="site" description="Reversibly protonated during proton transport" evidence="1">
    <location>
        <position position="58"/>
    </location>
</feature>
<reference key="1">
    <citation type="journal article" date="2004" name="J. Bacteriol.">
        <title>Complete genome sequence of Rickettsia typhi and comparison with sequences of other Rickettsiae.</title>
        <authorList>
            <person name="McLeod M.P."/>
            <person name="Qin X."/>
            <person name="Karpathy S.E."/>
            <person name="Gioia J."/>
            <person name="Highlander S.K."/>
            <person name="Fox G.E."/>
            <person name="McNeill T.Z."/>
            <person name="Jiang H."/>
            <person name="Muzny D."/>
            <person name="Jacob L.S."/>
            <person name="Hawes A.C."/>
            <person name="Sodergren E."/>
            <person name="Gill R."/>
            <person name="Hume J."/>
            <person name="Morgan M."/>
            <person name="Fan G."/>
            <person name="Amin A.G."/>
            <person name="Gibbs R.A."/>
            <person name="Hong C."/>
            <person name="Yu X.-J."/>
            <person name="Walker D.H."/>
            <person name="Weinstock G.M."/>
        </authorList>
    </citation>
    <scope>NUCLEOTIDE SEQUENCE [LARGE SCALE GENOMIC DNA]</scope>
    <source>
        <strain>ATCC VR-144 / Wilmington</strain>
    </source>
</reference>
<name>ATPL_RICTY</name>
<gene>
    <name evidence="1" type="primary">atpE</name>
    <name type="ordered locus">RT0106</name>
</gene>
<keyword id="KW-0066">ATP synthesis</keyword>
<keyword id="KW-0997">Cell inner membrane</keyword>
<keyword id="KW-1003">Cell membrane</keyword>
<keyword id="KW-0138">CF(0)</keyword>
<keyword id="KW-0375">Hydrogen ion transport</keyword>
<keyword id="KW-0406">Ion transport</keyword>
<keyword id="KW-0446">Lipid-binding</keyword>
<keyword id="KW-0472">Membrane</keyword>
<keyword id="KW-0812">Transmembrane</keyword>
<keyword id="KW-1133">Transmembrane helix</keyword>
<keyword id="KW-0813">Transport</keyword>
<sequence>MDIVSLKFIGIGFMAIGMYGAALGVSNIFSSLLSAIARNPSAAENLQRMALIGAGLAEAMGLFAFVIAMLLIFS</sequence>
<comment type="function">
    <text evidence="1">F(1)F(0) ATP synthase produces ATP from ADP in the presence of a proton or sodium gradient. F-type ATPases consist of two structural domains, F(1) containing the extramembraneous catalytic core and F(0) containing the membrane proton channel, linked together by a central stalk and a peripheral stalk. During catalysis, ATP synthesis in the catalytic domain of F(1) is coupled via a rotary mechanism of the central stalk subunits to proton translocation.</text>
</comment>
<comment type="function">
    <text evidence="1">Key component of the F(0) channel; it plays a direct role in translocation across the membrane. A homomeric c-ring of between 10-14 subunits forms the central stalk rotor element with the F(1) delta and epsilon subunits.</text>
</comment>
<comment type="subunit">
    <text evidence="1">F-type ATPases have 2 components, F(1) - the catalytic core - and F(0) - the membrane proton channel. F(1) has five subunits: alpha(3), beta(3), gamma(1), delta(1), epsilon(1). F(0) has three main subunits: a(1), b(2) and c(10-14). The alpha and beta chains form an alternating ring which encloses part of the gamma chain. F(1) is attached to F(0) by a central stalk formed by the gamma and epsilon chains, while a peripheral stalk is formed by the delta and b chains.</text>
</comment>
<comment type="subcellular location">
    <subcellularLocation>
        <location evidence="1">Cell inner membrane</location>
        <topology evidence="1">Multi-pass membrane protein</topology>
    </subcellularLocation>
</comment>
<comment type="similarity">
    <text evidence="1">Belongs to the ATPase C chain family.</text>
</comment>
<organism>
    <name type="scientific">Rickettsia typhi (strain ATCC VR-144 / Wilmington)</name>
    <dbReference type="NCBI Taxonomy" id="257363"/>
    <lineage>
        <taxon>Bacteria</taxon>
        <taxon>Pseudomonadati</taxon>
        <taxon>Pseudomonadota</taxon>
        <taxon>Alphaproteobacteria</taxon>
        <taxon>Rickettsiales</taxon>
        <taxon>Rickettsiaceae</taxon>
        <taxon>Rickettsieae</taxon>
        <taxon>Rickettsia</taxon>
        <taxon>typhus group</taxon>
    </lineage>
</organism>
<proteinExistence type="inferred from homology"/>
<accession>Q68XQ0</accession>
<protein>
    <recommendedName>
        <fullName evidence="1">ATP synthase subunit c</fullName>
    </recommendedName>
    <alternativeName>
        <fullName evidence="1">ATP synthase F(0) sector subunit c</fullName>
    </alternativeName>
    <alternativeName>
        <fullName evidence="1">F-type ATPase subunit c</fullName>
        <shortName evidence="1">F-ATPase subunit c</shortName>
    </alternativeName>
    <alternativeName>
        <fullName evidence="1">Lipid-binding protein</fullName>
    </alternativeName>
</protein>
<evidence type="ECO:0000255" key="1">
    <source>
        <dbReference type="HAMAP-Rule" id="MF_01396"/>
    </source>
</evidence>
<dbReference type="EMBL" id="AE017197">
    <property type="protein sequence ID" value="AAU03592.1"/>
    <property type="molecule type" value="Genomic_DNA"/>
</dbReference>
<dbReference type="RefSeq" id="WP_011190579.1">
    <property type="nucleotide sequence ID" value="NC_006142.1"/>
</dbReference>
<dbReference type="SMR" id="Q68XQ0"/>
<dbReference type="KEGG" id="rty:RT0106"/>
<dbReference type="eggNOG" id="COG0636">
    <property type="taxonomic scope" value="Bacteria"/>
</dbReference>
<dbReference type="HOGENOM" id="CLU_148047_4_0_5"/>
<dbReference type="OrthoDB" id="9811093at2"/>
<dbReference type="Proteomes" id="UP000000604">
    <property type="component" value="Chromosome"/>
</dbReference>
<dbReference type="GO" id="GO:0005886">
    <property type="term" value="C:plasma membrane"/>
    <property type="evidence" value="ECO:0007669"/>
    <property type="project" value="UniProtKB-SubCell"/>
</dbReference>
<dbReference type="GO" id="GO:0045259">
    <property type="term" value="C:proton-transporting ATP synthase complex"/>
    <property type="evidence" value="ECO:0007669"/>
    <property type="project" value="UniProtKB-KW"/>
</dbReference>
<dbReference type="GO" id="GO:0033177">
    <property type="term" value="C:proton-transporting two-sector ATPase complex, proton-transporting domain"/>
    <property type="evidence" value="ECO:0007669"/>
    <property type="project" value="InterPro"/>
</dbReference>
<dbReference type="GO" id="GO:0008289">
    <property type="term" value="F:lipid binding"/>
    <property type="evidence" value="ECO:0007669"/>
    <property type="project" value="UniProtKB-KW"/>
</dbReference>
<dbReference type="GO" id="GO:0046933">
    <property type="term" value="F:proton-transporting ATP synthase activity, rotational mechanism"/>
    <property type="evidence" value="ECO:0007669"/>
    <property type="project" value="UniProtKB-UniRule"/>
</dbReference>
<dbReference type="CDD" id="cd18182">
    <property type="entry name" value="ATP-synt_Fo_c_ATP5G3"/>
    <property type="match status" value="1"/>
</dbReference>
<dbReference type="Gene3D" id="1.20.20.10">
    <property type="entry name" value="F1F0 ATP synthase subunit C"/>
    <property type="match status" value="1"/>
</dbReference>
<dbReference type="HAMAP" id="MF_01396">
    <property type="entry name" value="ATP_synth_c_bact"/>
    <property type="match status" value="1"/>
</dbReference>
<dbReference type="InterPro" id="IPR000454">
    <property type="entry name" value="ATP_synth_F0_csu"/>
</dbReference>
<dbReference type="InterPro" id="IPR020537">
    <property type="entry name" value="ATP_synth_F0_csu_DDCD_BS"/>
</dbReference>
<dbReference type="InterPro" id="IPR038662">
    <property type="entry name" value="ATP_synth_F0_csu_sf"/>
</dbReference>
<dbReference type="InterPro" id="IPR002379">
    <property type="entry name" value="ATPase_proteolipid_c-like_dom"/>
</dbReference>
<dbReference type="InterPro" id="IPR035921">
    <property type="entry name" value="F/V-ATP_Csub_sf"/>
</dbReference>
<dbReference type="NCBIfam" id="NF005733">
    <property type="entry name" value="PRK07558.1"/>
    <property type="match status" value="1"/>
</dbReference>
<dbReference type="PANTHER" id="PTHR10031">
    <property type="entry name" value="ATP SYNTHASE LIPID-BINDING PROTEIN, MITOCHONDRIAL"/>
    <property type="match status" value="1"/>
</dbReference>
<dbReference type="PANTHER" id="PTHR10031:SF0">
    <property type="entry name" value="ATPASE PROTEIN 9"/>
    <property type="match status" value="1"/>
</dbReference>
<dbReference type="Pfam" id="PF00137">
    <property type="entry name" value="ATP-synt_C"/>
    <property type="match status" value="1"/>
</dbReference>
<dbReference type="PRINTS" id="PR00124">
    <property type="entry name" value="ATPASEC"/>
</dbReference>
<dbReference type="SUPFAM" id="SSF81333">
    <property type="entry name" value="F1F0 ATP synthase subunit C"/>
    <property type="match status" value="1"/>
</dbReference>
<dbReference type="PROSITE" id="PS00605">
    <property type="entry name" value="ATPASE_C"/>
    <property type="match status" value="1"/>
</dbReference>